<accession>P46724</accession>
<feature type="chain" id="PRO_0000114040" description="Glutamyl-tRNA reductase">
    <location>
        <begin position="1"/>
        <end position="467"/>
    </location>
</feature>
<feature type="region of interest" description="Disordered" evidence="2">
    <location>
        <begin position="446"/>
        <end position="467"/>
    </location>
</feature>
<feature type="compositionally biased region" description="Polar residues" evidence="2">
    <location>
        <begin position="447"/>
        <end position="467"/>
    </location>
</feature>
<feature type="active site" description="Nucleophile" evidence="1">
    <location>
        <position position="50"/>
    </location>
</feature>
<feature type="binding site" evidence="1">
    <location>
        <begin position="49"/>
        <end position="52"/>
    </location>
    <ligand>
        <name>substrate</name>
    </ligand>
</feature>
<feature type="binding site" evidence="1">
    <location>
        <position position="109"/>
    </location>
    <ligand>
        <name>substrate</name>
    </ligand>
</feature>
<feature type="binding site" evidence="1">
    <location>
        <begin position="114"/>
        <end position="116"/>
    </location>
    <ligand>
        <name>substrate</name>
    </ligand>
</feature>
<feature type="binding site" evidence="1">
    <location>
        <position position="120"/>
    </location>
    <ligand>
        <name>substrate</name>
    </ligand>
</feature>
<feature type="binding site" evidence="1">
    <location>
        <begin position="189"/>
        <end position="194"/>
    </location>
    <ligand>
        <name>NADP(+)</name>
        <dbReference type="ChEBI" id="CHEBI:58349"/>
    </ligand>
</feature>
<feature type="site" description="Important for activity" evidence="1">
    <location>
        <position position="99"/>
    </location>
</feature>
<organism>
    <name type="scientific">Mycobacterium leprae (strain TN)</name>
    <dbReference type="NCBI Taxonomy" id="272631"/>
    <lineage>
        <taxon>Bacteria</taxon>
        <taxon>Bacillati</taxon>
        <taxon>Actinomycetota</taxon>
        <taxon>Actinomycetes</taxon>
        <taxon>Mycobacteriales</taxon>
        <taxon>Mycobacteriaceae</taxon>
        <taxon>Mycobacterium</taxon>
    </lineage>
</organism>
<proteinExistence type="inferred from homology"/>
<reference key="1">
    <citation type="submission" date="1994-03" db="EMBL/GenBank/DDBJ databases">
        <authorList>
            <person name="Smith D.R."/>
            <person name="Robison K."/>
        </authorList>
    </citation>
    <scope>NUCLEOTIDE SEQUENCE [GENOMIC DNA]</scope>
</reference>
<reference key="2">
    <citation type="journal article" date="2001" name="Nature">
        <title>Massive gene decay in the leprosy bacillus.</title>
        <authorList>
            <person name="Cole S.T."/>
            <person name="Eiglmeier K."/>
            <person name="Parkhill J."/>
            <person name="James K.D."/>
            <person name="Thomson N.R."/>
            <person name="Wheeler P.R."/>
            <person name="Honore N."/>
            <person name="Garnier T."/>
            <person name="Churcher C.M."/>
            <person name="Harris D.E."/>
            <person name="Mungall K.L."/>
            <person name="Basham D."/>
            <person name="Brown D."/>
            <person name="Chillingworth T."/>
            <person name="Connor R."/>
            <person name="Davies R.M."/>
            <person name="Devlin K."/>
            <person name="Duthoy S."/>
            <person name="Feltwell T."/>
            <person name="Fraser A."/>
            <person name="Hamlin N."/>
            <person name="Holroyd S."/>
            <person name="Hornsby T."/>
            <person name="Jagels K."/>
            <person name="Lacroix C."/>
            <person name="Maclean J."/>
            <person name="Moule S."/>
            <person name="Murphy L.D."/>
            <person name="Oliver K."/>
            <person name="Quail M.A."/>
            <person name="Rajandream M.A."/>
            <person name="Rutherford K.M."/>
            <person name="Rutter S."/>
            <person name="Seeger K."/>
            <person name="Simon S."/>
            <person name="Simmonds M."/>
            <person name="Skelton J."/>
            <person name="Squares R."/>
            <person name="Squares S."/>
            <person name="Stevens K."/>
            <person name="Taylor K."/>
            <person name="Whitehead S."/>
            <person name="Woodward J.R."/>
            <person name="Barrell B.G."/>
        </authorList>
    </citation>
    <scope>NUCLEOTIDE SEQUENCE [LARGE SCALE GENOMIC DNA]</scope>
    <source>
        <strain>TN</strain>
    </source>
</reference>
<name>HEM1_MYCLE</name>
<evidence type="ECO:0000255" key="1">
    <source>
        <dbReference type="HAMAP-Rule" id="MF_00087"/>
    </source>
</evidence>
<evidence type="ECO:0000256" key="2">
    <source>
        <dbReference type="SAM" id="MobiDB-lite"/>
    </source>
</evidence>
<sequence length="467" mass="49483">MSILLFGVSHRSAPVSVLEQLSLDRSDQIKIVDRVLQSPLVTEAMVLSTCNRVEVYAVVEAFHAGLSVIGQVLSEYSAMSIGDLTKYAYVRYSEAAVEHLFTVASGLDSAVVGEQQVLGQVRRAYAAAEANRTVGQVLHEVAQRALSVGKRVHSETAIDAAGVSVVSVALGIAGRTLGGLAGRIAVVIGAGAMGALSSSYLTQANVGRIHVLNRSLSRARRLAGKIGESGVPADVWTLNHLDEALADADLVVSCTGAVSPVVSLADVHHALAAMRRDETTRPLVICDLGMPRDVDPAVAKLPGVWVVDVEGVQREPSARASAADVDAARRIVAAEVATYLTRQRMAEVAPTVTALRQRAADVVEAELLRLDHRLPGLESAQREEVARTVRRVVDKLLHAPTVRIKQLASAPGGDSYTEALRELFELDQTAVDAVATAGELPVMVSGFSDTTRYGTSPAQSSSKYHAE</sequence>
<comment type="function">
    <text evidence="1">Catalyzes the NADPH-dependent reduction of glutamyl-tRNA(Glu) to glutamate 1-semialdehyde (GSA).</text>
</comment>
<comment type="catalytic activity">
    <reaction evidence="1">
        <text>(S)-4-amino-5-oxopentanoate + tRNA(Glu) + NADP(+) = L-glutamyl-tRNA(Glu) + NADPH + H(+)</text>
        <dbReference type="Rhea" id="RHEA:12344"/>
        <dbReference type="Rhea" id="RHEA-COMP:9663"/>
        <dbReference type="Rhea" id="RHEA-COMP:9680"/>
        <dbReference type="ChEBI" id="CHEBI:15378"/>
        <dbReference type="ChEBI" id="CHEBI:57501"/>
        <dbReference type="ChEBI" id="CHEBI:57783"/>
        <dbReference type="ChEBI" id="CHEBI:58349"/>
        <dbReference type="ChEBI" id="CHEBI:78442"/>
        <dbReference type="ChEBI" id="CHEBI:78520"/>
        <dbReference type="EC" id="1.2.1.70"/>
    </reaction>
</comment>
<comment type="pathway">
    <text evidence="1">Porphyrin-containing compound metabolism; protoporphyrin-IX biosynthesis; 5-aminolevulinate from L-glutamyl-tRNA(Glu): step 1/2.</text>
</comment>
<comment type="subunit">
    <text evidence="1">Homodimer.</text>
</comment>
<comment type="domain">
    <text evidence="1">Possesses an unusual extended V-shaped dimeric structure with each monomer consisting of three distinct domains arranged along a curved 'spinal' alpha-helix. The N-terminal catalytic domain specifically recognizes the glutamate moiety of the substrate. The second domain is the NADPH-binding domain, and the third C-terminal domain is responsible for dimerization.</text>
</comment>
<comment type="miscellaneous">
    <text evidence="1">During catalysis, the active site Cys acts as a nucleophile attacking the alpha-carbonyl group of tRNA-bound glutamate with the formation of a thioester intermediate between enzyme and glutamate, and the concomitant release of tRNA(Glu). The thioester intermediate is finally reduced by direct hydride transfer from NADPH, to form the product GSA.</text>
</comment>
<comment type="similarity">
    <text evidence="1">Belongs to the glutamyl-tRNA reductase family.</text>
</comment>
<keyword id="KW-0521">NADP</keyword>
<keyword id="KW-0560">Oxidoreductase</keyword>
<keyword id="KW-0627">Porphyrin biosynthesis</keyword>
<keyword id="KW-1185">Reference proteome</keyword>
<protein>
    <recommendedName>
        <fullName evidence="1">Glutamyl-tRNA reductase</fullName>
        <shortName evidence="1">GluTR</shortName>
        <ecNumber evidence="1">1.2.1.70</ecNumber>
    </recommendedName>
</protein>
<dbReference type="EC" id="1.2.1.70" evidence="1"/>
<dbReference type="EMBL" id="U00018">
    <property type="protein sequence ID" value="AAA17243.1"/>
    <property type="molecule type" value="Genomic_DNA"/>
</dbReference>
<dbReference type="EMBL" id="AL583925">
    <property type="protein sequence ID" value="CAC31938.1"/>
    <property type="molecule type" value="Genomic_DNA"/>
</dbReference>
<dbReference type="PIR" id="S72907">
    <property type="entry name" value="S72907"/>
</dbReference>
<dbReference type="RefSeq" id="NP_302567.1">
    <property type="nucleotide sequence ID" value="NC_002677.1"/>
</dbReference>
<dbReference type="RefSeq" id="WP_010908887.1">
    <property type="nucleotide sequence ID" value="NC_002677.1"/>
</dbReference>
<dbReference type="SMR" id="P46724"/>
<dbReference type="STRING" id="272631.gene:17576284"/>
<dbReference type="KEGG" id="mle:ML2422"/>
<dbReference type="PATRIC" id="fig|272631.5.peg.4659"/>
<dbReference type="Leproma" id="ML2422"/>
<dbReference type="eggNOG" id="COG0373">
    <property type="taxonomic scope" value="Bacteria"/>
</dbReference>
<dbReference type="HOGENOM" id="CLU_035113_4_0_11"/>
<dbReference type="OrthoDB" id="110209at2"/>
<dbReference type="UniPathway" id="UPA00251">
    <property type="reaction ID" value="UER00316"/>
</dbReference>
<dbReference type="Proteomes" id="UP000000806">
    <property type="component" value="Chromosome"/>
</dbReference>
<dbReference type="GO" id="GO:0008883">
    <property type="term" value="F:glutamyl-tRNA reductase activity"/>
    <property type="evidence" value="ECO:0007669"/>
    <property type="project" value="UniProtKB-UniRule"/>
</dbReference>
<dbReference type="GO" id="GO:0050661">
    <property type="term" value="F:NADP binding"/>
    <property type="evidence" value="ECO:0007669"/>
    <property type="project" value="InterPro"/>
</dbReference>
<dbReference type="GO" id="GO:0019353">
    <property type="term" value="P:protoporphyrinogen IX biosynthetic process from glutamate"/>
    <property type="evidence" value="ECO:0007669"/>
    <property type="project" value="TreeGrafter"/>
</dbReference>
<dbReference type="CDD" id="cd05213">
    <property type="entry name" value="NAD_bind_Glutamyl_tRNA_reduct"/>
    <property type="match status" value="1"/>
</dbReference>
<dbReference type="FunFam" id="3.30.460.30:FF:000001">
    <property type="entry name" value="Glutamyl-tRNA reductase"/>
    <property type="match status" value="1"/>
</dbReference>
<dbReference type="Gene3D" id="3.30.460.30">
    <property type="entry name" value="Glutamyl-tRNA reductase, N-terminal domain"/>
    <property type="match status" value="1"/>
</dbReference>
<dbReference type="Gene3D" id="3.40.50.720">
    <property type="entry name" value="NAD(P)-binding Rossmann-like Domain"/>
    <property type="match status" value="1"/>
</dbReference>
<dbReference type="HAMAP" id="MF_00087">
    <property type="entry name" value="Glu_tRNA_reductase"/>
    <property type="match status" value="1"/>
</dbReference>
<dbReference type="InterPro" id="IPR000343">
    <property type="entry name" value="4pyrrol_synth_GluRdtase"/>
</dbReference>
<dbReference type="InterPro" id="IPR015896">
    <property type="entry name" value="4pyrrol_synth_GluRdtase_dimer"/>
</dbReference>
<dbReference type="InterPro" id="IPR015895">
    <property type="entry name" value="4pyrrol_synth_GluRdtase_N"/>
</dbReference>
<dbReference type="InterPro" id="IPR018214">
    <property type="entry name" value="GluRdtase_CS"/>
</dbReference>
<dbReference type="InterPro" id="IPR036453">
    <property type="entry name" value="GluRdtase_dimer_dom_sf"/>
</dbReference>
<dbReference type="InterPro" id="IPR036343">
    <property type="entry name" value="GluRdtase_N_sf"/>
</dbReference>
<dbReference type="InterPro" id="IPR036291">
    <property type="entry name" value="NAD(P)-bd_dom_sf"/>
</dbReference>
<dbReference type="InterPro" id="IPR006151">
    <property type="entry name" value="Shikm_DH/Glu-tRNA_Rdtase"/>
</dbReference>
<dbReference type="NCBIfam" id="TIGR01035">
    <property type="entry name" value="hemA"/>
    <property type="match status" value="1"/>
</dbReference>
<dbReference type="NCBIfam" id="NF000744">
    <property type="entry name" value="PRK00045.1-3"/>
    <property type="match status" value="1"/>
</dbReference>
<dbReference type="PANTHER" id="PTHR43013">
    <property type="entry name" value="GLUTAMYL-TRNA REDUCTASE"/>
    <property type="match status" value="1"/>
</dbReference>
<dbReference type="PANTHER" id="PTHR43013:SF1">
    <property type="entry name" value="GLUTAMYL-TRNA REDUCTASE"/>
    <property type="match status" value="1"/>
</dbReference>
<dbReference type="Pfam" id="PF00745">
    <property type="entry name" value="GlutR_dimer"/>
    <property type="match status" value="1"/>
</dbReference>
<dbReference type="Pfam" id="PF05201">
    <property type="entry name" value="GlutR_N"/>
    <property type="match status" value="1"/>
</dbReference>
<dbReference type="Pfam" id="PF01488">
    <property type="entry name" value="Shikimate_DH"/>
    <property type="match status" value="1"/>
</dbReference>
<dbReference type="PIRSF" id="PIRSF000445">
    <property type="entry name" value="4pyrrol_synth_GluRdtase"/>
    <property type="match status" value="1"/>
</dbReference>
<dbReference type="SUPFAM" id="SSF69742">
    <property type="entry name" value="Glutamyl tRNA-reductase catalytic, N-terminal domain"/>
    <property type="match status" value="1"/>
</dbReference>
<dbReference type="SUPFAM" id="SSF69075">
    <property type="entry name" value="Glutamyl tRNA-reductase dimerization domain"/>
    <property type="match status" value="1"/>
</dbReference>
<dbReference type="SUPFAM" id="SSF51735">
    <property type="entry name" value="NAD(P)-binding Rossmann-fold domains"/>
    <property type="match status" value="1"/>
</dbReference>
<dbReference type="PROSITE" id="PS00747">
    <property type="entry name" value="GLUTR"/>
    <property type="match status" value="1"/>
</dbReference>
<gene>
    <name evidence="1" type="primary">hemA</name>
    <name type="ordered locus">ML2422</name>
    <name type="ORF">B2168_C3_261</name>
</gene>